<reference key="1">
    <citation type="journal article" date="2006" name="Proc. Natl. Acad. Sci. U.S.A.">
        <title>Comparative genomics of the lactic acid bacteria.</title>
        <authorList>
            <person name="Makarova K.S."/>
            <person name="Slesarev A."/>
            <person name="Wolf Y.I."/>
            <person name="Sorokin A."/>
            <person name="Mirkin B."/>
            <person name="Koonin E.V."/>
            <person name="Pavlov A."/>
            <person name="Pavlova N."/>
            <person name="Karamychev V."/>
            <person name="Polouchine N."/>
            <person name="Shakhova V."/>
            <person name="Grigoriev I."/>
            <person name="Lou Y."/>
            <person name="Rohksar D."/>
            <person name="Lucas S."/>
            <person name="Huang K."/>
            <person name="Goodstein D.M."/>
            <person name="Hawkins T."/>
            <person name="Plengvidhya V."/>
            <person name="Welker D."/>
            <person name="Hughes J."/>
            <person name="Goh Y."/>
            <person name="Benson A."/>
            <person name="Baldwin K."/>
            <person name="Lee J.-H."/>
            <person name="Diaz-Muniz I."/>
            <person name="Dosti B."/>
            <person name="Smeianov V."/>
            <person name="Wechter W."/>
            <person name="Barabote R."/>
            <person name="Lorca G."/>
            <person name="Altermann E."/>
            <person name="Barrangou R."/>
            <person name="Ganesan B."/>
            <person name="Xie Y."/>
            <person name="Rawsthorne H."/>
            <person name="Tamir D."/>
            <person name="Parker C."/>
            <person name="Breidt F."/>
            <person name="Broadbent J.R."/>
            <person name="Hutkins R."/>
            <person name="O'Sullivan D."/>
            <person name="Steele J."/>
            <person name="Unlu G."/>
            <person name="Saier M.H. Jr."/>
            <person name="Klaenhammer T."/>
            <person name="Richardson P."/>
            <person name="Kozyavkin S."/>
            <person name="Weimer B.C."/>
            <person name="Mills D.A."/>
        </authorList>
    </citation>
    <scope>NUCLEOTIDE SEQUENCE [LARGE SCALE GENOMIC DNA]</scope>
    <source>
        <strain>ATCC BAA-491 / LMD-9</strain>
    </source>
</reference>
<comment type="function">
    <text evidence="1">Responsible for channeling the electrons from the oxidation of dihydroorotate from the FMN redox center in the PyrD type B subunit to the ultimate electron acceptor NAD(+).</text>
</comment>
<comment type="cofactor">
    <cofactor evidence="1">
        <name>[2Fe-2S] cluster</name>
        <dbReference type="ChEBI" id="CHEBI:190135"/>
    </cofactor>
    <text evidence="1">Binds 1 [2Fe-2S] cluster per subunit.</text>
</comment>
<comment type="cofactor">
    <cofactor evidence="1">
        <name>FAD</name>
        <dbReference type="ChEBI" id="CHEBI:57692"/>
    </cofactor>
    <text evidence="1">Binds 1 FAD per subunit.</text>
</comment>
<comment type="pathway">
    <text evidence="1">Pyrimidine metabolism; UMP biosynthesis via de novo pathway; orotate from (S)-dihydroorotate (NAD(+) route): step 1/1.</text>
</comment>
<comment type="subunit">
    <text evidence="1">Heterotetramer of 2 PyrK and 2 PyrD type B subunits.</text>
</comment>
<comment type="similarity">
    <text evidence="1">Belongs to the PyrK family.</text>
</comment>
<sequence length="257" mass="27817">MILIEDLTVVSQREIAPRIFEMVLKGEMVADMQLGQFVHLKVPDPSKLLRRPISISEIDYNKKEATIVYRVEREGTAILSKMVAGQTIDTMGPQGNGFDISIIEAGQKALLVGGGIGVPPLVETAKQLKAKGVEVVSVIGFANKNAVILEDKLRACGDVYVTTDDGSYGIKGYVSTVIDNFDWTPDAVYSCGAPGMLKYVDSKFENHPHAYVSMEARMACGMGACYACVVHVKGETDAKNLRVCEEGPVFPTGKVIV</sequence>
<keyword id="KW-0001">2Fe-2S</keyword>
<keyword id="KW-0249">Electron transport</keyword>
<keyword id="KW-0274">FAD</keyword>
<keyword id="KW-0285">Flavoprotein</keyword>
<keyword id="KW-0408">Iron</keyword>
<keyword id="KW-0411">Iron-sulfur</keyword>
<keyword id="KW-0479">Metal-binding</keyword>
<keyword id="KW-0665">Pyrimidine biosynthesis</keyword>
<keyword id="KW-0813">Transport</keyword>
<dbReference type="EMBL" id="CP000419">
    <property type="protein sequence ID" value="ABJ66185.1"/>
    <property type="molecule type" value="Genomic_DNA"/>
</dbReference>
<dbReference type="RefSeq" id="WP_011681108.1">
    <property type="nucleotide sequence ID" value="NC_008532.1"/>
</dbReference>
<dbReference type="SMR" id="Q03KT7"/>
<dbReference type="KEGG" id="ste:STER_0968"/>
<dbReference type="HOGENOM" id="CLU_003827_1_2_9"/>
<dbReference type="UniPathway" id="UPA00070">
    <property type="reaction ID" value="UER00945"/>
</dbReference>
<dbReference type="GO" id="GO:0051537">
    <property type="term" value="F:2 iron, 2 sulfur cluster binding"/>
    <property type="evidence" value="ECO:0007669"/>
    <property type="project" value="UniProtKB-KW"/>
</dbReference>
<dbReference type="GO" id="GO:0009055">
    <property type="term" value="F:electron transfer activity"/>
    <property type="evidence" value="ECO:0007669"/>
    <property type="project" value="UniProtKB-UniRule"/>
</dbReference>
<dbReference type="GO" id="GO:0050660">
    <property type="term" value="F:flavin adenine dinucleotide binding"/>
    <property type="evidence" value="ECO:0007669"/>
    <property type="project" value="InterPro"/>
</dbReference>
<dbReference type="GO" id="GO:0046872">
    <property type="term" value="F:metal ion binding"/>
    <property type="evidence" value="ECO:0007669"/>
    <property type="project" value="UniProtKB-KW"/>
</dbReference>
<dbReference type="GO" id="GO:0016491">
    <property type="term" value="F:oxidoreductase activity"/>
    <property type="evidence" value="ECO:0007669"/>
    <property type="project" value="InterPro"/>
</dbReference>
<dbReference type="GO" id="GO:0044205">
    <property type="term" value="P:'de novo' UMP biosynthetic process"/>
    <property type="evidence" value="ECO:0007669"/>
    <property type="project" value="UniProtKB-UniRule"/>
</dbReference>
<dbReference type="CDD" id="cd06218">
    <property type="entry name" value="DHOD_e_trans"/>
    <property type="match status" value="1"/>
</dbReference>
<dbReference type="Gene3D" id="2.10.240.10">
    <property type="entry name" value="Dihydroorotate dehydrogenase, electron transfer subunit"/>
    <property type="match status" value="1"/>
</dbReference>
<dbReference type="Gene3D" id="3.40.50.80">
    <property type="entry name" value="Nucleotide-binding domain of ferredoxin-NADP reductase (FNR) module"/>
    <property type="match status" value="1"/>
</dbReference>
<dbReference type="Gene3D" id="2.40.30.10">
    <property type="entry name" value="Translation factors"/>
    <property type="match status" value="1"/>
</dbReference>
<dbReference type="HAMAP" id="MF_01211">
    <property type="entry name" value="DHODB_Fe_S_bind"/>
    <property type="match status" value="1"/>
</dbReference>
<dbReference type="InterPro" id="IPR012165">
    <property type="entry name" value="Cyt_c3_hydrogenase_gsu"/>
</dbReference>
<dbReference type="InterPro" id="IPR037117">
    <property type="entry name" value="Dihydroorotate_DH_ele_sf"/>
</dbReference>
<dbReference type="InterPro" id="IPR019480">
    <property type="entry name" value="Dihydroorotate_DH_Fe-S-bd"/>
</dbReference>
<dbReference type="InterPro" id="IPR023455">
    <property type="entry name" value="Dihydroorotate_DHASE_ETsu"/>
</dbReference>
<dbReference type="InterPro" id="IPR017927">
    <property type="entry name" value="FAD-bd_FR_type"/>
</dbReference>
<dbReference type="InterPro" id="IPR039261">
    <property type="entry name" value="FNR_nucleotide-bd"/>
</dbReference>
<dbReference type="InterPro" id="IPR050353">
    <property type="entry name" value="PyrK_electron_transfer"/>
</dbReference>
<dbReference type="InterPro" id="IPR017938">
    <property type="entry name" value="Riboflavin_synthase-like_b-brl"/>
</dbReference>
<dbReference type="NCBIfam" id="NF000797">
    <property type="entry name" value="PRK00054.1-2"/>
    <property type="match status" value="1"/>
</dbReference>
<dbReference type="PANTHER" id="PTHR43513">
    <property type="entry name" value="DIHYDROOROTATE DEHYDROGENASE B (NAD(+)), ELECTRON TRANSFER SUBUNIT"/>
    <property type="match status" value="1"/>
</dbReference>
<dbReference type="PANTHER" id="PTHR43513:SF3">
    <property type="entry name" value="DIHYDROOROTATE DEHYDROGENASE B (NAD(+)), ELECTRON TRANSFER SUBUNIT-RELATED"/>
    <property type="match status" value="1"/>
</dbReference>
<dbReference type="Pfam" id="PF10418">
    <property type="entry name" value="DHODB_Fe-S_bind"/>
    <property type="match status" value="1"/>
</dbReference>
<dbReference type="PIRSF" id="PIRSF006816">
    <property type="entry name" value="Cyc3_hyd_g"/>
    <property type="match status" value="1"/>
</dbReference>
<dbReference type="PRINTS" id="PR00409">
    <property type="entry name" value="PHDIOXRDTASE"/>
</dbReference>
<dbReference type="SUPFAM" id="SSF52343">
    <property type="entry name" value="Ferredoxin reductase-like, C-terminal NADP-linked domain"/>
    <property type="match status" value="1"/>
</dbReference>
<dbReference type="SUPFAM" id="SSF63380">
    <property type="entry name" value="Riboflavin synthase domain-like"/>
    <property type="match status" value="1"/>
</dbReference>
<dbReference type="PROSITE" id="PS51384">
    <property type="entry name" value="FAD_FR"/>
    <property type="match status" value="1"/>
</dbReference>
<feature type="chain" id="PRO_1000066408" description="Dihydroorotate dehydrogenase B (NAD(+)), electron transfer subunit">
    <location>
        <begin position="1"/>
        <end position="257"/>
    </location>
</feature>
<feature type="domain" description="FAD-binding FR-type" evidence="1">
    <location>
        <begin position="2"/>
        <end position="100"/>
    </location>
</feature>
<feature type="binding site" evidence="1">
    <location>
        <begin position="51"/>
        <end position="54"/>
    </location>
    <ligand>
        <name>FAD</name>
        <dbReference type="ChEBI" id="CHEBI:57692"/>
    </ligand>
</feature>
<feature type="binding site" evidence="1">
    <location>
        <begin position="68"/>
        <end position="70"/>
    </location>
    <ligand>
        <name>FAD</name>
        <dbReference type="ChEBI" id="CHEBI:57692"/>
    </ligand>
</feature>
<feature type="binding site" evidence="1">
    <location>
        <begin position="75"/>
        <end position="76"/>
    </location>
    <ligand>
        <name>FAD</name>
        <dbReference type="ChEBI" id="CHEBI:57692"/>
    </ligand>
</feature>
<feature type="binding site" evidence="1">
    <location>
        <position position="220"/>
    </location>
    <ligand>
        <name>[2Fe-2S] cluster</name>
        <dbReference type="ChEBI" id="CHEBI:190135"/>
    </ligand>
</feature>
<feature type="binding site" evidence="1">
    <location>
        <position position="225"/>
    </location>
    <ligand>
        <name>[2Fe-2S] cluster</name>
        <dbReference type="ChEBI" id="CHEBI:190135"/>
    </ligand>
</feature>
<feature type="binding site" evidence="1">
    <location>
        <position position="228"/>
    </location>
    <ligand>
        <name>[2Fe-2S] cluster</name>
        <dbReference type="ChEBI" id="CHEBI:190135"/>
    </ligand>
</feature>
<feature type="binding site" evidence="1">
    <location>
        <position position="244"/>
    </location>
    <ligand>
        <name>[2Fe-2S] cluster</name>
        <dbReference type="ChEBI" id="CHEBI:190135"/>
    </ligand>
</feature>
<protein>
    <recommendedName>
        <fullName evidence="1">Dihydroorotate dehydrogenase B (NAD(+)), electron transfer subunit</fullName>
    </recommendedName>
    <alternativeName>
        <fullName evidence="1">Dihydroorotate oxidase B, electron transfer subunit</fullName>
    </alternativeName>
</protein>
<proteinExistence type="inferred from homology"/>
<evidence type="ECO:0000255" key="1">
    <source>
        <dbReference type="HAMAP-Rule" id="MF_01211"/>
    </source>
</evidence>
<organism>
    <name type="scientific">Streptococcus thermophilus (strain ATCC BAA-491 / LMD-9)</name>
    <dbReference type="NCBI Taxonomy" id="322159"/>
    <lineage>
        <taxon>Bacteria</taxon>
        <taxon>Bacillati</taxon>
        <taxon>Bacillota</taxon>
        <taxon>Bacilli</taxon>
        <taxon>Lactobacillales</taxon>
        <taxon>Streptococcaceae</taxon>
        <taxon>Streptococcus</taxon>
    </lineage>
</organism>
<accession>Q03KT7</accession>
<name>PYRK_STRTD</name>
<gene>
    <name evidence="1" type="primary">pyrK</name>
    <name type="ordered locus">STER_0968</name>
</gene>